<gene>
    <name evidence="1" type="primary">ruvB</name>
    <name type="ordered locus">CF0602</name>
</gene>
<accession>Q254B4</accession>
<protein>
    <recommendedName>
        <fullName evidence="1">Holliday junction branch migration complex subunit RuvB</fullName>
        <ecNumber evidence="1">3.6.4.-</ecNumber>
    </recommendedName>
</protein>
<proteinExistence type="inferred from homology"/>
<evidence type="ECO:0000255" key="1">
    <source>
        <dbReference type="HAMAP-Rule" id="MF_00016"/>
    </source>
</evidence>
<keyword id="KW-0067">ATP-binding</keyword>
<keyword id="KW-0963">Cytoplasm</keyword>
<keyword id="KW-0227">DNA damage</keyword>
<keyword id="KW-0233">DNA recombination</keyword>
<keyword id="KW-0234">DNA repair</keyword>
<keyword id="KW-0238">DNA-binding</keyword>
<keyword id="KW-0378">Hydrolase</keyword>
<keyword id="KW-0547">Nucleotide-binding</keyword>
<sequence>MTHQVSVLHQDKKFDIALRPKGLREFCGQAQLTERLELFLSAALQRGEVPGHCLFFGPPGLGKTSLAHIVARTVGKGLVVASGPQLVKPSDLLGLLTSLQEGDVFFIDEIHRMGKVAEEYLYSAMEDYKIDITIDSGPGARSISVDLAPFSLVGATTRSGMLSEPLRARFSFSGRVSYYSDEDLATILKRSSNLLGIDADAAALYEIARRSRGTPRLANNLLRWVRDFAQMREGNRINSDVAEKALSMLLIDDWGLNEIDIKLLTTIIDYYQGGPVGIKTLSVAVGEDIKTLEDVYEPFLILKGLLKKTSRGRMVTQLAYNHLKRCSDNLQILGEEK</sequence>
<organism>
    <name type="scientific">Chlamydia felis (strain Fe/C-56)</name>
    <name type="common">Chlamydophila felis</name>
    <dbReference type="NCBI Taxonomy" id="264202"/>
    <lineage>
        <taxon>Bacteria</taxon>
        <taxon>Pseudomonadati</taxon>
        <taxon>Chlamydiota</taxon>
        <taxon>Chlamydiia</taxon>
        <taxon>Chlamydiales</taxon>
        <taxon>Chlamydiaceae</taxon>
        <taxon>Chlamydia/Chlamydophila group</taxon>
        <taxon>Chlamydia</taxon>
    </lineage>
</organism>
<name>RUVB_CHLFF</name>
<dbReference type="EC" id="3.6.4.-" evidence="1"/>
<dbReference type="EMBL" id="AP006861">
    <property type="protein sequence ID" value="BAE81374.1"/>
    <property type="molecule type" value="Genomic_DNA"/>
</dbReference>
<dbReference type="RefSeq" id="WP_011458154.1">
    <property type="nucleotide sequence ID" value="NC_007899.1"/>
</dbReference>
<dbReference type="SMR" id="Q254B4"/>
<dbReference type="STRING" id="264202.CF0602"/>
<dbReference type="KEGG" id="cfe:CF0602"/>
<dbReference type="eggNOG" id="COG2255">
    <property type="taxonomic scope" value="Bacteria"/>
</dbReference>
<dbReference type="HOGENOM" id="CLU_055599_1_0_0"/>
<dbReference type="OrthoDB" id="9804478at2"/>
<dbReference type="Proteomes" id="UP000001260">
    <property type="component" value="Chromosome"/>
</dbReference>
<dbReference type="GO" id="GO:0005737">
    <property type="term" value="C:cytoplasm"/>
    <property type="evidence" value="ECO:0007669"/>
    <property type="project" value="UniProtKB-SubCell"/>
</dbReference>
<dbReference type="GO" id="GO:0048476">
    <property type="term" value="C:Holliday junction resolvase complex"/>
    <property type="evidence" value="ECO:0007669"/>
    <property type="project" value="UniProtKB-UniRule"/>
</dbReference>
<dbReference type="GO" id="GO:0005524">
    <property type="term" value="F:ATP binding"/>
    <property type="evidence" value="ECO:0007669"/>
    <property type="project" value="UniProtKB-UniRule"/>
</dbReference>
<dbReference type="GO" id="GO:0016887">
    <property type="term" value="F:ATP hydrolysis activity"/>
    <property type="evidence" value="ECO:0007669"/>
    <property type="project" value="InterPro"/>
</dbReference>
<dbReference type="GO" id="GO:0000400">
    <property type="term" value="F:four-way junction DNA binding"/>
    <property type="evidence" value="ECO:0007669"/>
    <property type="project" value="UniProtKB-UniRule"/>
</dbReference>
<dbReference type="GO" id="GO:0009378">
    <property type="term" value="F:four-way junction helicase activity"/>
    <property type="evidence" value="ECO:0007669"/>
    <property type="project" value="InterPro"/>
</dbReference>
<dbReference type="GO" id="GO:0006310">
    <property type="term" value="P:DNA recombination"/>
    <property type="evidence" value="ECO:0007669"/>
    <property type="project" value="UniProtKB-UniRule"/>
</dbReference>
<dbReference type="GO" id="GO:0006281">
    <property type="term" value="P:DNA repair"/>
    <property type="evidence" value="ECO:0007669"/>
    <property type="project" value="UniProtKB-UniRule"/>
</dbReference>
<dbReference type="CDD" id="cd00009">
    <property type="entry name" value="AAA"/>
    <property type="match status" value="1"/>
</dbReference>
<dbReference type="Gene3D" id="1.10.8.60">
    <property type="match status" value="1"/>
</dbReference>
<dbReference type="Gene3D" id="3.40.50.300">
    <property type="entry name" value="P-loop containing nucleotide triphosphate hydrolases"/>
    <property type="match status" value="1"/>
</dbReference>
<dbReference type="Gene3D" id="1.10.10.10">
    <property type="entry name" value="Winged helix-like DNA-binding domain superfamily/Winged helix DNA-binding domain"/>
    <property type="match status" value="1"/>
</dbReference>
<dbReference type="HAMAP" id="MF_00016">
    <property type="entry name" value="DNA_HJ_migration_RuvB"/>
    <property type="match status" value="1"/>
</dbReference>
<dbReference type="InterPro" id="IPR003593">
    <property type="entry name" value="AAA+_ATPase"/>
</dbReference>
<dbReference type="InterPro" id="IPR041445">
    <property type="entry name" value="AAA_lid_4"/>
</dbReference>
<dbReference type="InterPro" id="IPR004605">
    <property type="entry name" value="DNA_helicase_Holl-junc_RuvB"/>
</dbReference>
<dbReference type="InterPro" id="IPR027417">
    <property type="entry name" value="P-loop_NTPase"/>
</dbReference>
<dbReference type="InterPro" id="IPR008824">
    <property type="entry name" value="RuvB-like_N"/>
</dbReference>
<dbReference type="InterPro" id="IPR008823">
    <property type="entry name" value="RuvB_C"/>
</dbReference>
<dbReference type="InterPro" id="IPR036388">
    <property type="entry name" value="WH-like_DNA-bd_sf"/>
</dbReference>
<dbReference type="InterPro" id="IPR036390">
    <property type="entry name" value="WH_DNA-bd_sf"/>
</dbReference>
<dbReference type="NCBIfam" id="NF000868">
    <property type="entry name" value="PRK00080.1"/>
    <property type="match status" value="1"/>
</dbReference>
<dbReference type="NCBIfam" id="TIGR00635">
    <property type="entry name" value="ruvB"/>
    <property type="match status" value="1"/>
</dbReference>
<dbReference type="PANTHER" id="PTHR42848">
    <property type="match status" value="1"/>
</dbReference>
<dbReference type="PANTHER" id="PTHR42848:SF1">
    <property type="entry name" value="HOLLIDAY JUNCTION BRANCH MIGRATION COMPLEX SUBUNIT RUVB"/>
    <property type="match status" value="1"/>
</dbReference>
<dbReference type="Pfam" id="PF17864">
    <property type="entry name" value="AAA_lid_4"/>
    <property type="match status" value="1"/>
</dbReference>
<dbReference type="Pfam" id="PF05491">
    <property type="entry name" value="RuvB_C"/>
    <property type="match status" value="1"/>
</dbReference>
<dbReference type="Pfam" id="PF05496">
    <property type="entry name" value="RuvB_N"/>
    <property type="match status" value="1"/>
</dbReference>
<dbReference type="SMART" id="SM00382">
    <property type="entry name" value="AAA"/>
    <property type="match status" value="1"/>
</dbReference>
<dbReference type="SUPFAM" id="SSF52540">
    <property type="entry name" value="P-loop containing nucleoside triphosphate hydrolases"/>
    <property type="match status" value="1"/>
</dbReference>
<dbReference type="SUPFAM" id="SSF46785">
    <property type="entry name" value="Winged helix' DNA-binding domain"/>
    <property type="match status" value="1"/>
</dbReference>
<feature type="chain" id="PRO_1000001385" description="Holliday junction branch migration complex subunit RuvB">
    <location>
        <begin position="1"/>
        <end position="337"/>
    </location>
</feature>
<feature type="region of interest" description="Large ATPase domain (RuvB-L)" evidence="1">
    <location>
        <begin position="1"/>
        <end position="179"/>
    </location>
</feature>
<feature type="region of interest" description="Small ATPAse domain (RuvB-S)" evidence="1">
    <location>
        <begin position="180"/>
        <end position="250"/>
    </location>
</feature>
<feature type="region of interest" description="Head domain (RuvB-H)" evidence="1">
    <location>
        <begin position="253"/>
        <end position="337"/>
    </location>
</feature>
<feature type="binding site" evidence="1">
    <location>
        <position position="18"/>
    </location>
    <ligand>
        <name>ATP</name>
        <dbReference type="ChEBI" id="CHEBI:30616"/>
    </ligand>
</feature>
<feature type="binding site" evidence="1">
    <location>
        <position position="19"/>
    </location>
    <ligand>
        <name>ATP</name>
        <dbReference type="ChEBI" id="CHEBI:30616"/>
    </ligand>
</feature>
<feature type="binding site" evidence="1">
    <location>
        <position position="60"/>
    </location>
    <ligand>
        <name>ATP</name>
        <dbReference type="ChEBI" id="CHEBI:30616"/>
    </ligand>
</feature>
<feature type="binding site" evidence="1">
    <location>
        <position position="63"/>
    </location>
    <ligand>
        <name>ATP</name>
        <dbReference type="ChEBI" id="CHEBI:30616"/>
    </ligand>
</feature>
<feature type="binding site" evidence="1">
    <location>
        <position position="64"/>
    </location>
    <ligand>
        <name>ATP</name>
        <dbReference type="ChEBI" id="CHEBI:30616"/>
    </ligand>
</feature>
<feature type="binding site" evidence="1">
    <location>
        <position position="64"/>
    </location>
    <ligand>
        <name>Mg(2+)</name>
        <dbReference type="ChEBI" id="CHEBI:18420"/>
    </ligand>
</feature>
<feature type="binding site" evidence="1">
    <location>
        <position position="65"/>
    </location>
    <ligand>
        <name>ATP</name>
        <dbReference type="ChEBI" id="CHEBI:30616"/>
    </ligand>
</feature>
<feature type="binding site" evidence="1">
    <location>
        <begin position="126"/>
        <end position="128"/>
    </location>
    <ligand>
        <name>ATP</name>
        <dbReference type="ChEBI" id="CHEBI:30616"/>
    </ligand>
</feature>
<feature type="binding site" evidence="1">
    <location>
        <position position="169"/>
    </location>
    <ligand>
        <name>ATP</name>
        <dbReference type="ChEBI" id="CHEBI:30616"/>
    </ligand>
</feature>
<feature type="binding site" evidence="1">
    <location>
        <position position="179"/>
    </location>
    <ligand>
        <name>ATP</name>
        <dbReference type="ChEBI" id="CHEBI:30616"/>
    </ligand>
</feature>
<feature type="binding site" evidence="1">
    <location>
        <position position="216"/>
    </location>
    <ligand>
        <name>ATP</name>
        <dbReference type="ChEBI" id="CHEBI:30616"/>
    </ligand>
</feature>
<feature type="binding site" evidence="1">
    <location>
        <position position="308"/>
    </location>
    <ligand>
        <name>DNA</name>
        <dbReference type="ChEBI" id="CHEBI:16991"/>
    </ligand>
</feature>
<feature type="binding site" evidence="1">
    <location>
        <position position="313"/>
    </location>
    <ligand>
        <name>DNA</name>
        <dbReference type="ChEBI" id="CHEBI:16991"/>
    </ligand>
</feature>
<comment type="function">
    <text evidence="1">The RuvA-RuvB-RuvC complex processes Holliday junction (HJ) DNA during genetic recombination and DNA repair, while the RuvA-RuvB complex plays an important role in the rescue of blocked DNA replication forks via replication fork reversal (RFR). RuvA specifically binds to HJ cruciform DNA, conferring on it an open structure. The RuvB hexamer acts as an ATP-dependent pump, pulling dsDNA into and through the RuvAB complex. RuvB forms 2 homohexamers on either side of HJ DNA bound by 1 or 2 RuvA tetramers; 4 subunits per hexamer contact DNA at a time. Coordinated motions by a converter formed by DNA-disengaged RuvB subunits stimulates ATP hydrolysis and nucleotide exchange. Immobilization of the converter enables RuvB to convert the ATP-contained energy into a lever motion, pulling 2 nucleotides of DNA out of the RuvA tetramer per ATP hydrolyzed, thus driving DNA branch migration. The RuvB motors rotate together with the DNA substrate, which together with the progressing nucleotide cycle form the mechanistic basis for DNA recombination by continuous HJ branch migration. Branch migration allows RuvC to scan DNA until it finds its consensus sequence, where it cleaves and resolves cruciform DNA.</text>
</comment>
<comment type="catalytic activity">
    <reaction evidence="1">
        <text>ATP + H2O = ADP + phosphate + H(+)</text>
        <dbReference type="Rhea" id="RHEA:13065"/>
        <dbReference type="ChEBI" id="CHEBI:15377"/>
        <dbReference type="ChEBI" id="CHEBI:15378"/>
        <dbReference type="ChEBI" id="CHEBI:30616"/>
        <dbReference type="ChEBI" id="CHEBI:43474"/>
        <dbReference type="ChEBI" id="CHEBI:456216"/>
    </reaction>
</comment>
<comment type="subunit">
    <text evidence="1">Homohexamer. Forms an RuvA(8)-RuvB(12)-Holliday junction (HJ) complex. HJ DNA is sandwiched between 2 RuvA tetramers; dsDNA enters through RuvA and exits via RuvB. An RuvB hexamer assembles on each DNA strand where it exits the tetramer. Each RuvB hexamer is contacted by two RuvA subunits (via domain III) on 2 adjacent RuvB subunits; this complex drives branch migration. In the full resolvosome a probable DNA-RuvA(4)-RuvB(12)-RuvC(2) complex forms which resolves the HJ.</text>
</comment>
<comment type="subcellular location">
    <subcellularLocation>
        <location evidence="1">Cytoplasm</location>
    </subcellularLocation>
</comment>
<comment type="domain">
    <text evidence="1">Has 3 domains, the large (RuvB-L) and small ATPase (RuvB-S) domains and the C-terminal head (RuvB-H) domain. The head domain binds DNA, while the ATPase domains jointly bind ATP, ADP or are empty depending on the state of the subunit in the translocation cycle. During a single DNA translocation step the structure of each domain remains the same, but their relative positions change.</text>
</comment>
<comment type="similarity">
    <text evidence="1">Belongs to the RuvB family.</text>
</comment>
<reference key="1">
    <citation type="journal article" date="2006" name="DNA Res.">
        <title>Genome sequence of the cat pathogen, Chlamydophila felis.</title>
        <authorList>
            <person name="Azuma Y."/>
            <person name="Hirakawa H."/>
            <person name="Yamashita A."/>
            <person name="Cai Y."/>
            <person name="Rahman M.A."/>
            <person name="Suzuki H."/>
            <person name="Mitaku S."/>
            <person name="Toh H."/>
            <person name="Goto S."/>
            <person name="Murakami T."/>
            <person name="Sugi K."/>
            <person name="Hayashi H."/>
            <person name="Fukushi H."/>
            <person name="Hattori M."/>
            <person name="Kuhara S."/>
            <person name="Shirai M."/>
        </authorList>
    </citation>
    <scope>NUCLEOTIDE SEQUENCE [LARGE SCALE GENOMIC DNA]</scope>
    <source>
        <strain>Fe/C-56</strain>
    </source>
</reference>